<evidence type="ECO:0000255" key="1">
    <source>
        <dbReference type="HAMAP-Rule" id="MF_01961"/>
    </source>
</evidence>
<evidence type="ECO:0000256" key="2">
    <source>
        <dbReference type="SAM" id="MobiDB-lite"/>
    </source>
</evidence>
<feature type="chain" id="PRO_0000354887" description="Catalase-peroxidase">
    <location>
        <begin position="1"/>
        <end position="727"/>
    </location>
</feature>
<feature type="region of interest" description="Disordered" evidence="2">
    <location>
        <begin position="1"/>
        <end position="24"/>
    </location>
</feature>
<feature type="active site" description="Proton acceptor" evidence="1">
    <location>
        <position position="96"/>
    </location>
</feature>
<feature type="binding site" description="axial binding residue" evidence="1">
    <location>
        <position position="258"/>
    </location>
    <ligand>
        <name>heme b</name>
        <dbReference type="ChEBI" id="CHEBI:60344"/>
    </ligand>
    <ligandPart>
        <name>Fe</name>
        <dbReference type="ChEBI" id="CHEBI:18248"/>
    </ligandPart>
</feature>
<feature type="site" description="Transition state stabilizer" evidence="1">
    <location>
        <position position="92"/>
    </location>
</feature>
<feature type="cross-link" description="Tryptophyl-tyrosyl-methioninium (Trp-Tyr) (with M-243)" evidence="1">
    <location>
        <begin position="95"/>
        <end position="217"/>
    </location>
</feature>
<feature type="cross-link" description="Tryptophyl-tyrosyl-methioninium (Tyr-Met) (with W-95)" evidence="1">
    <location>
        <begin position="217"/>
        <end position="243"/>
    </location>
</feature>
<organism>
    <name type="scientific">Rhizobium meliloti (strain 1021)</name>
    <name type="common">Ensifer meliloti</name>
    <name type="synonym">Sinorhizobium meliloti</name>
    <dbReference type="NCBI Taxonomy" id="266834"/>
    <lineage>
        <taxon>Bacteria</taxon>
        <taxon>Pseudomonadati</taxon>
        <taxon>Pseudomonadota</taxon>
        <taxon>Alphaproteobacteria</taxon>
        <taxon>Hyphomicrobiales</taxon>
        <taxon>Rhizobiaceae</taxon>
        <taxon>Sinorhizobium/Ensifer group</taxon>
        <taxon>Sinorhizobium</taxon>
    </lineage>
</organism>
<comment type="function">
    <text evidence="1">Bifunctional enzyme with both catalase and broad-spectrum peroxidase activity.</text>
</comment>
<comment type="catalytic activity">
    <reaction evidence="1">
        <text>H2O2 + AH2 = A + 2 H2O</text>
        <dbReference type="Rhea" id="RHEA:30275"/>
        <dbReference type="ChEBI" id="CHEBI:13193"/>
        <dbReference type="ChEBI" id="CHEBI:15377"/>
        <dbReference type="ChEBI" id="CHEBI:16240"/>
        <dbReference type="ChEBI" id="CHEBI:17499"/>
        <dbReference type="EC" id="1.11.1.21"/>
    </reaction>
</comment>
<comment type="catalytic activity">
    <reaction evidence="1">
        <text>2 H2O2 = O2 + 2 H2O</text>
        <dbReference type="Rhea" id="RHEA:20309"/>
        <dbReference type="ChEBI" id="CHEBI:15377"/>
        <dbReference type="ChEBI" id="CHEBI:15379"/>
        <dbReference type="ChEBI" id="CHEBI:16240"/>
        <dbReference type="EC" id="1.11.1.21"/>
    </reaction>
</comment>
<comment type="cofactor">
    <cofactor evidence="1">
        <name>heme b</name>
        <dbReference type="ChEBI" id="CHEBI:60344"/>
    </cofactor>
    <text evidence="1">Binds 1 heme b (iron(II)-protoporphyrin IX) group per dimer.</text>
</comment>
<comment type="subunit">
    <text evidence="1">Homodimer or homotetramer.</text>
</comment>
<comment type="PTM">
    <text evidence="1">Formation of the three residue Trp-Tyr-Met cross-link is important for the catalase, but not the peroxidase activity of the enzyme.</text>
</comment>
<comment type="similarity">
    <text evidence="1">Belongs to the peroxidase family. Peroxidase/catalase subfamily.</text>
</comment>
<protein>
    <recommendedName>
        <fullName evidence="1">Catalase-peroxidase</fullName>
        <shortName evidence="1">CP</shortName>
        <ecNumber evidence="1">1.11.1.21</ecNumber>
    </recommendedName>
    <alternativeName>
        <fullName evidence="1">Peroxidase/catalase</fullName>
    </alternativeName>
</protein>
<reference key="1">
    <citation type="journal article" date="2001" name="Proc. Natl. Acad. Sci. U.S.A.">
        <title>Nucleotide sequence and predicted functions of the entire Sinorhizobium meliloti pSymA megaplasmid.</title>
        <authorList>
            <person name="Barnett M.J."/>
            <person name="Fisher R.F."/>
            <person name="Jones T."/>
            <person name="Komp C."/>
            <person name="Abola A.P."/>
            <person name="Barloy-Hubler F."/>
            <person name="Bowser L."/>
            <person name="Capela D."/>
            <person name="Galibert F."/>
            <person name="Gouzy J."/>
            <person name="Gurjal M."/>
            <person name="Hong A."/>
            <person name="Huizar L."/>
            <person name="Hyman R.W."/>
            <person name="Kahn D."/>
            <person name="Kahn M.L."/>
            <person name="Kalman S."/>
            <person name="Keating D.H."/>
            <person name="Palm C."/>
            <person name="Peck M.C."/>
            <person name="Surzycki R."/>
            <person name="Wells D.H."/>
            <person name="Yeh K.-C."/>
            <person name="Davis R.W."/>
            <person name="Federspiel N.A."/>
            <person name="Long S.R."/>
        </authorList>
    </citation>
    <scope>NUCLEOTIDE SEQUENCE [LARGE SCALE GENOMIC DNA]</scope>
    <source>
        <strain>1021</strain>
    </source>
</reference>
<reference key="2">
    <citation type="journal article" date="2001" name="Science">
        <title>The composite genome of the legume symbiont Sinorhizobium meliloti.</title>
        <authorList>
            <person name="Galibert F."/>
            <person name="Finan T.M."/>
            <person name="Long S.R."/>
            <person name="Puehler A."/>
            <person name="Abola P."/>
            <person name="Ampe F."/>
            <person name="Barloy-Hubler F."/>
            <person name="Barnett M.J."/>
            <person name="Becker A."/>
            <person name="Boistard P."/>
            <person name="Bothe G."/>
            <person name="Boutry M."/>
            <person name="Bowser L."/>
            <person name="Buhrmester J."/>
            <person name="Cadieu E."/>
            <person name="Capela D."/>
            <person name="Chain P."/>
            <person name="Cowie A."/>
            <person name="Davis R.W."/>
            <person name="Dreano S."/>
            <person name="Federspiel N.A."/>
            <person name="Fisher R.F."/>
            <person name="Gloux S."/>
            <person name="Godrie T."/>
            <person name="Goffeau A."/>
            <person name="Golding B."/>
            <person name="Gouzy J."/>
            <person name="Gurjal M."/>
            <person name="Hernandez-Lucas I."/>
            <person name="Hong A."/>
            <person name="Huizar L."/>
            <person name="Hyman R.W."/>
            <person name="Jones T."/>
            <person name="Kahn D."/>
            <person name="Kahn M.L."/>
            <person name="Kalman S."/>
            <person name="Keating D.H."/>
            <person name="Kiss E."/>
            <person name="Komp C."/>
            <person name="Lelaure V."/>
            <person name="Masuy D."/>
            <person name="Palm C."/>
            <person name="Peck M.C."/>
            <person name="Pohl T.M."/>
            <person name="Portetelle D."/>
            <person name="Purnelle B."/>
            <person name="Ramsperger U."/>
            <person name="Surzycki R."/>
            <person name="Thebault P."/>
            <person name="Vandenbol M."/>
            <person name="Vorhoelter F.J."/>
            <person name="Weidner S."/>
            <person name="Wells D.H."/>
            <person name="Wong K."/>
            <person name="Yeh K.-C."/>
            <person name="Batut J."/>
        </authorList>
    </citation>
    <scope>NUCLEOTIDE SEQUENCE [LARGE SCALE GENOMIC DNA]</scope>
    <source>
        <strain>1021</strain>
    </source>
</reference>
<dbReference type="EC" id="1.11.1.21" evidence="1"/>
<dbReference type="EMBL" id="AE006469">
    <property type="protein sequence ID" value="AAK65944.1"/>
    <property type="molecule type" value="Genomic_DNA"/>
</dbReference>
<dbReference type="PIR" id="F95422">
    <property type="entry name" value="F95422"/>
</dbReference>
<dbReference type="RefSeq" id="NP_436532.1">
    <property type="nucleotide sequence ID" value="NC_003037.1"/>
</dbReference>
<dbReference type="RefSeq" id="WP_010968229.1">
    <property type="nucleotide sequence ID" value="NC_003037.1"/>
</dbReference>
<dbReference type="SMR" id="Q92XG8"/>
<dbReference type="PeroxiBase" id="2675">
    <property type="entry name" value="SmeCP01"/>
</dbReference>
<dbReference type="EnsemblBacteria" id="AAK65944">
    <property type="protein sequence ID" value="AAK65944"/>
    <property type="gene ID" value="SMa2379"/>
</dbReference>
<dbReference type="KEGG" id="sme:SMa2379"/>
<dbReference type="PATRIC" id="fig|266834.11.peg.1343"/>
<dbReference type="HOGENOM" id="CLU_025424_2_0_5"/>
<dbReference type="OrthoDB" id="9759743at2"/>
<dbReference type="Proteomes" id="UP000001976">
    <property type="component" value="Plasmid pSymA"/>
</dbReference>
<dbReference type="GO" id="GO:0005829">
    <property type="term" value="C:cytosol"/>
    <property type="evidence" value="ECO:0007669"/>
    <property type="project" value="TreeGrafter"/>
</dbReference>
<dbReference type="GO" id="GO:0004096">
    <property type="term" value="F:catalase activity"/>
    <property type="evidence" value="ECO:0007669"/>
    <property type="project" value="UniProtKB-UniRule"/>
</dbReference>
<dbReference type="GO" id="GO:0020037">
    <property type="term" value="F:heme binding"/>
    <property type="evidence" value="ECO:0007669"/>
    <property type="project" value="InterPro"/>
</dbReference>
<dbReference type="GO" id="GO:0046872">
    <property type="term" value="F:metal ion binding"/>
    <property type="evidence" value="ECO:0007669"/>
    <property type="project" value="UniProtKB-KW"/>
</dbReference>
<dbReference type="GO" id="GO:0070301">
    <property type="term" value="P:cellular response to hydrogen peroxide"/>
    <property type="evidence" value="ECO:0007669"/>
    <property type="project" value="TreeGrafter"/>
</dbReference>
<dbReference type="GO" id="GO:0042744">
    <property type="term" value="P:hydrogen peroxide catabolic process"/>
    <property type="evidence" value="ECO:0007669"/>
    <property type="project" value="UniProtKB-KW"/>
</dbReference>
<dbReference type="CDD" id="cd00649">
    <property type="entry name" value="catalase_peroxidase_1"/>
    <property type="match status" value="1"/>
</dbReference>
<dbReference type="CDD" id="cd08200">
    <property type="entry name" value="catalase_peroxidase_2"/>
    <property type="match status" value="1"/>
</dbReference>
<dbReference type="FunFam" id="1.10.420.10:FF:000002">
    <property type="entry name" value="Catalase-peroxidase"/>
    <property type="match status" value="1"/>
</dbReference>
<dbReference type="FunFam" id="1.10.420.10:FF:000004">
    <property type="entry name" value="Catalase-peroxidase"/>
    <property type="match status" value="1"/>
</dbReference>
<dbReference type="FunFam" id="1.10.520.10:FF:000002">
    <property type="entry name" value="Catalase-peroxidase"/>
    <property type="match status" value="1"/>
</dbReference>
<dbReference type="Gene3D" id="1.10.520.10">
    <property type="match status" value="2"/>
</dbReference>
<dbReference type="Gene3D" id="1.10.420.10">
    <property type="entry name" value="Peroxidase, domain 2"/>
    <property type="match status" value="2"/>
</dbReference>
<dbReference type="HAMAP" id="MF_01961">
    <property type="entry name" value="Catal_peroxid"/>
    <property type="match status" value="1"/>
</dbReference>
<dbReference type="InterPro" id="IPR000763">
    <property type="entry name" value="Catalase_peroxidase"/>
</dbReference>
<dbReference type="InterPro" id="IPR002016">
    <property type="entry name" value="Haem_peroxidase"/>
</dbReference>
<dbReference type="InterPro" id="IPR010255">
    <property type="entry name" value="Haem_peroxidase_sf"/>
</dbReference>
<dbReference type="InterPro" id="IPR019794">
    <property type="entry name" value="Peroxidases_AS"/>
</dbReference>
<dbReference type="InterPro" id="IPR019793">
    <property type="entry name" value="Peroxidases_heam-ligand_BS"/>
</dbReference>
<dbReference type="NCBIfam" id="TIGR00198">
    <property type="entry name" value="cat_per_HPI"/>
    <property type="match status" value="1"/>
</dbReference>
<dbReference type="NCBIfam" id="NF011635">
    <property type="entry name" value="PRK15061.1"/>
    <property type="match status" value="1"/>
</dbReference>
<dbReference type="PANTHER" id="PTHR30555:SF0">
    <property type="entry name" value="CATALASE-PEROXIDASE"/>
    <property type="match status" value="1"/>
</dbReference>
<dbReference type="PANTHER" id="PTHR30555">
    <property type="entry name" value="HYDROPEROXIDASE I, BIFUNCTIONAL CATALASE-PEROXIDASE"/>
    <property type="match status" value="1"/>
</dbReference>
<dbReference type="Pfam" id="PF00141">
    <property type="entry name" value="peroxidase"/>
    <property type="match status" value="2"/>
</dbReference>
<dbReference type="PRINTS" id="PR00460">
    <property type="entry name" value="BPEROXIDASE"/>
</dbReference>
<dbReference type="PRINTS" id="PR00458">
    <property type="entry name" value="PEROXIDASE"/>
</dbReference>
<dbReference type="SUPFAM" id="SSF48113">
    <property type="entry name" value="Heme-dependent peroxidases"/>
    <property type="match status" value="2"/>
</dbReference>
<dbReference type="PROSITE" id="PS00435">
    <property type="entry name" value="PEROXIDASE_1"/>
    <property type="match status" value="1"/>
</dbReference>
<dbReference type="PROSITE" id="PS00436">
    <property type="entry name" value="PEROXIDASE_2"/>
    <property type="match status" value="1"/>
</dbReference>
<dbReference type="PROSITE" id="PS50873">
    <property type="entry name" value="PEROXIDASE_4"/>
    <property type="match status" value="2"/>
</dbReference>
<geneLocation type="plasmid">
    <name>pSymA</name>
    <name>megaplasmid 1</name>
</geneLocation>
<name>KATG_RHIME</name>
<keyword id="KW-0349">Heme</keyword>
<keyword id="KW-0376">Hydrogen peroxide</keyword>
<keyword id="KW-0408">Iron</keyword>
<keyword id="KW-0479">Metal-binding</keyword>
<keyword id="KW-0560">Oxidoreductase</keyword>
<keyword id="KW-0575">Peroxidase</keyword>
<keyword id="KW-0614">Plasmid</keyword>
<keyword id="KW-1185">Reference proteome</keyword>
<gene>
    <name evidence="1" type="primary">katG</name>
    <name type="ordered locus">RA1286</name>
    <name type="ORF">SMa2379</name>
</gene>
<proteinExistence type="inferred from homology"/>
<sequence length="727" mass="80292">MDQKSDSAGKCPVAHTAPRGRSNRDWWPDQLDVQVLHRHSGLSDPLGNTFNYAEEFKKLDLDALKRDLRALMTDSQDWWPADFGHYGGLFIRMAWHSAGTYRITDGRGGAGQGQQRFAPLNSWPDNANLDKARRLLWPIKQKYGNRISWADLLILTGNVALESMGFKTFGFAGGRVDVWEPEELFWGPEGTWLGDERYSGERQLSEPLAAVQMGLIYVNPEGPNGNPDPVAAARDIRETFARMAMNDEETVALIAGGHTFGKTHGAGDPSFIGADPEGGAIEDQGLGWKSTFGTGVGKDAITGGPEVTWSQTPTRWSNHFFENLFNHEWELTKSPAGAYQWKAKNAEATIPDAYDPSRKHVPTRLTTDLSLRFDPAYEKISRRFLENPDEFADAFARAWFKLTHRDMGPKVRYLGPEVPAEDLIWQDVIPAVDHRLVDETDIAGLKAKIIASGLSVQELVSTAWASASTFRGSDKRGGANGARIRLAPQKDWEVNRPAQLARVLSVLEGIQRDFNAAQTDGKKISLADLIVLAGGAAVEKAAKAGGHDITVPFTPGRMDASEAQTDAASFAALEPRADGFRNYVSTTRQQFMKPEEALVDRAQLLTLTAPEMTVLVGGLRVLKAGEPKHGVFTSRPEALTNDFFVNLLDMGTQWSPIEGEEGVYEGRDRRTGAARWTGTRVDLIFGSHSQLRAFAEVYAQSDAREKFVKDFVAAWTKVMNADRFDLV</sequence>
<accession>Q92XG8</accession>